<proteinExistence type="evidence at protein level"/>
<reference key="1">
    <citation type="journal article" date="1997" name="Mol. Microbiol.">
        <title>Functional analysis of ssaJ and the ssaK/U operon, 13 genes encoding components of the type III secretion apparatus of Salmonella pathogenicity island 2.</title>
        <authorList>
            <person name="Hensel M."/>
            <person name="Shea J.E."/>
            <person name="Raupach B."/>
            <person name="Monack D."/>
            <person name="Falkow S."/>
            <person name="Gleeson C."/>
            <person name="Kubo T."/>
            <person name="Holden D.W."/>
        </authorList>
    </citation>
    <scope>NUCLEOTIDE SEQUENCE [GENOMIC DNA]</scope>
    <source>
        <strain>LT2</strain>
    </source>
</reference>
<reference key="2">
    <citation type="journal article" date="2001" name="Nature">
        <title>Complete genome sequence of Salmonella enterica serovar Typhimurium LT2.</title>
        <authorList>
            <person name="McClelland M."/>
            <person name="Sanderson K.E."/>
            <person name="Spieth J."/>
            <person name="Clifton S.W."/>
            <person name="Latreille P."/>
            <person name="Courtney L."/>
            <person name="Porwollik S."/>
            <person name="Ali J."/>
            <person name="Dante M."/>
            <person name="Du F."/>
            <person name="Hou S."/>
            <person name="Layman D."/>
            <person name="Leonard S."/>
            <person name="Nguyen C."/>
            <person name="Scott K."/>
            <person name="Holmes A."/>
            <person name="Grewal N."/>
            <person name="Mulvaney E."/>
            <person name="Ryan E."/>
            <person name="Sun H."/>
            <person name="Florea L."/>
            <person name="Miller W."/>
            <person name="Stoneking T."/>
            <person name="Nhan M."/>
            <person name="Waterston R."/>
            <person name="Wilson R.K."/>
        </authorList>
    </citation>
    <scope>NUCLEOTIDE SEQUENCE [LARGE SCALE GENOMIC DNA]</scope>
    <source>
        <strain>LT2 / SGSC1412 / ATCC 700720</strain>
    </source>
</reference>
<reference key="3">
    <citation type="journal article" date="1998" name="Mol. Microbiol.">
        <title>Macrophage-dependent induction of the Salmonella pathogenicity island 2 type III secretion system and its role in intracellular survival.</title>
        <authorList>
            <person name="Cirillo D.M."/>
            <person name="Valdivia R.H."/>
            <person name="Monack D.M."/>
            <person name="Falkow S."/>
        </authorList>
    </citation>
    <scope>INDUCTION</scope>
</reference>
<reference key="4">
    <citation type="journal article" date="2008" name="FEMS Immunol. Med. Microbiol.">
        <title>Identification of Salmonella SPI-2 secretion system components required for SpvB-mediated cytotoxicity in macrophages and virulence in mice.</title>
        <authorList>
            <person name="Browne S.H."/>
            <person name="Hasegawa P."/>
            <person name="Okamoto S."/>
            <person name="Fierer J."/>
            <person name="Guiney D.G."/>
        </authorList>
    </citation>
    <scope>FUNCTION IN SPVB EXPORT</scope>
    <scope>DISRUPTION PHENOTYPE</scope>
    <source>
        <strain>LT2 / SGSC1412 / ATCC 700720</strain>
    </source>
</reference>
<protein>
    <recommendedName>
        <fullName>Secretion system apparatus protein SsaV</fullName>
    </recommendedName>
</protein>
<gene>
    <name type="primary">ssaV</name>
    <name type="ordered locus">STM1414</name>
</gene>
<sequence length="681" mass="75322">MRSWLGEGVRAQQWLSVCAGRQDMVLATVLLIAIVMMLLPLPTWMVDILITINLMFSVILLLIAIYLSDPLDLSVFPSLLLITTLYRLSLTISTSRLVLLQHNAGNIVDAFGKFVVGGNLTVGLVVFTIITIVQFIVITKGIERVAEVSARFSLDGMPGKQMSIDGDLRAGVIDADHARTLRQHVQQESRFLGAMDGAMKFVKGDTIAGIIVVLVNIIGGIIIAIVQYDMSMSEAVHTYSVLSIGDGLCGQIPSLLISLSAGIIVTRVPGEKRQNLATELSSQIARQPQSLILTAVVLMLLALIPGFPFITLAFFSALLALPIILIRRKKSVVSANGVEAPEKDSMVPGACPLILRLSPTLHSADLIRDIDAMRWFLFEDTGVPLPEVNIEVLPEPTEKLTVLLYQEPVFSLSIPAQADYLLIGADASVVGDSQTLPNGMGQICWLTKDMAHKAQGFGLDVFAGSQRISALLKCVLLRHMGEFIGVQETRYLMNAMEKNYSELVKELQRQLPINKIAETLQRLVSERVSIRDLRLIFGTLIDWAPREKDVLMLTEYVRIALRRHILRRLNPEGKPLPILRIGEGIENLVRESIRQTAMGTYTALSSRHKTQILQLIEQALKQSAKLFIVTSVDTRRFLRKITEATLFDVPILSWQELGEESLIQVVESIDLSEEELADNEE</sequence>
<comment type="function">
    <text evidence="2">Component of Salmonella pathogenicity island 2 (SPI-2) type III secretion system, required for secretion of some type III-secreted effectors including the SpvB toxin.</text>
</comment>
<comment type="subcellular location">
    <subcellularLocation>
        <location evidence="4">Cell inner membrane</location>
        <topology evidence="4">Multi-pass membrane protein</topology>
    </subcellularLocation>
</comment>
<comment type="induction">
    <text evidence="3">Induced following entry into host cells.</text>
</comment>
<comment type="disruption phenotype">
    <text evidence="2">Disruption prevents SpvB-induced F-actin depolymerization in human macrophages without affecting intra-bacterial SpvB protein levels.</text>
</comment>
<comment type="similarity">
    <text evidence="4">Belongs to the FHIPEP (flagella/HR/invasion proteins export pore) family.</text>
</comment>
<keyword id="KW-0002">3D-structure</keyword>
<keyword id="KW-0997">Cell inner membrane</keyword>
<keyword id="KW-1003">Cell membrane</keyword>
<keyword id="KW-0472">Membrane</keyword>
<keyword id="KW-0653">Protein transport</keyword>
<keyword id="KW-1185">Reference proteome</keyword>
<keyword id="KW-0812">Transmembrane</keyword>
<keyword id="KW-1133">Transmembrane helix</keyword>
<keyword id="KW-0813">Transport</keyword>
<evidence type="ECO:0000255" key="1"/>
<evidence type="ECO:0000269" key="2">
    <source>
    </source>
</evidence>
<evidence type="ECO:0000269" key="3">
    <source>
    </source>
</evidence>
<evidence type="ECO:0000305" key="4"/>
<evidence type="ECO:0007829" key="5">
    <source>
        <dbReference type="PDB" id="7AWA"/>
    </source>
</evidence>
<evidence type="ECO:0007829" key="6">
    <source>
        <dbReference type="PDB" id="7FEB"/>
    </source>
</evidence>
<dbReference type="EMBL" id="Y09357">
    <property type="protein sequence ID" value="CAA70536.1"/>
    <property type="molecule type" value="Genomic_DNA"/>
</dbReference>
<dbReference type="EMBL" id="AE006468">
    <property type="protein sequence ID" value="AAL20338.1"/>
    <property type="molecule type" value="Genomic_DNA"/>
</dbReference>
<dbReference type="RefSeq" id="NP_460379.1">
    <property type="nucleotide sequence ID" value="NC_003197.2"/>
</dbReference>
<dbReference type="RefSeq" id="WP_001258231.1">
    <property type="nucleotide sequence ID" value="NC_003197.2"/>
</dbReference>
<dbReference type="PDB" id="7AWA">
    <property type="method" value="EM"/>
    <property type="resolution" value="3.50 A"/>
    <property type="chains" value="A=1-681"/>
</dbReference>
<dbReference type="PDB" id="7FEB">
    <property type="method" value="EM"/>
    <property type="resolution" value="2.11 A"/>
    <property type="chains" value="A/B/C/D/E/F/G/H/I=346-681"/>
</dbReference>
<dbReference type="PDB" id="7FEC">
    <property type="method" value="EM"/>
    <property type="resolution" value="3.64 A"/>
    <property type="chains" value="A/B/C/D/E/F/G/H/I=346-681"/>
</dbReference>
<dbReference type="PDB" id="7FED">
    <property type="method" value="EM"/>
    <property type="resolution" value="3.55 A"/>
    <property type="chains" value="A/B/C/D/E/F/G/H/I/J/K/L/M/N/O/P/Q/R=346-681"/>
</dbReference>
<dbReference type="PDBsum" id="7AWA"/>
<dbReference type="PDBsum" id="7FEB"/>
<dbReference type="PDBsum" id="7FEC"/>
<dbReference type="PDBsum" id="7FED"/>
<dbReference type="EMDB" id="EMD-11928"/>
<dbReference type="EMDB" id="EMD-31551"/>
<dbReference type="EMDB" id="EMD-31552"/>
<dbReference type="EMDB" id="EMD-31553"/>
<dbReference type="SMR" id="P74856"/>
<dbReference type="STRING" id="99287.STM1414"/>
<dbReference type="PaxDb" id="99287-STM1414"/>
<dbReference type="GeneID" id="1252932"/>
<dbReference type="KEGG" id="stm:STM1414"/>
<dbReference type="PATRIC" id="fig|99287.12.peg.1498"/>
<dbReference type="HOGENOM" id="CLU_015346_3_0_6"/>
<dbReference type="OMA" id="QHERDIN"/>
<dbReference type="PhylomeDB" id="P74856"/>
<dbReference type="BioCyc" id="SENT99287:STM1414-MONOMER"/>
<dbReference type="PHI-base" id="PHI:8727"/>
<dbReference type="PHI-base" id="PHI:9175"/>
<dbReference type="Proteomes" id="UP000001014">
    <property type="component" value="Chromosome"/>
</dbReference>
<dbReference type="GO" id="GO:0005886">
    <property type="term" value="C:plasma membrane"/>
    <property type="evidence" value="ECO:0000318"/>
    <property type="project" value="GO_Central"/>
</dbReference>
<dbReference type="GO" id="GO:0009306">
    <property type="term" value="P:protein secretion"/>
    <property type="evidence" value="ECO:0007669"/>
    <property type="project" value="InterPro"/>
</dbReference>
<dbReference type="Gene3D" id="3.40.30.60">
    <property type="entry name" value="FHIPEP family, domain 1"/>
    <property type="match status" value="1"/>
</dbReference>
<dbReference type="Gene3D" id="1.10.8.540">
    <property type="entry name" value="FHIPEP family, domain 3"/>
    <property type="match status" value="1"/>
</dbReference>
<dbReference type="Gene3D" id="3.40.50.12790">
    <property type="entry name" value="FHIPEP family, domain 4"/>
    <property type="match status" value="1"/>
</dbReference>
<dbReference type="InterPro" id="IPR042194">
    <property type="entry name" value="FHIPEP_1"/>
</dbReference>
<dbReference type="InterPro" id="IPR042193">
    <property type="entry name" value="FHIPEP_3"/>
</dbReference>
<dbReference type="InterPro" id="IPR042196">
    <property type="entry name" value="FHIPEP_4"/>
</dbReference>
<dbReference type="InterPro" id="IPR025505">
    <property type="entry name" value="FHIPEP_CS"/>
</dbReference>
<dbReference type="InterPro" id="IPR001712">
    <property type="entry name" value="T3SS_FHIPEP"/>
</dbReference>
<dbReference type="InterPro" id="IPR006302">
    <property type="entry name" value="T3SS_HrcV"/>
</dbReference>
<dbReference type="NCBIfam" id="TIGR01399">
    <property type="entry name" value="hrcV"/>
    <property type="match status" value="1"/>
</dbReference>
<dbReference type="NCBIfam" id="NF009363">
    <property type="entry name" value="PRK12720.1"/>
    <property type="match status" value="1"/>
</dbReference>
<dbReference type="PANTHER" id="PTHR30161">
    <property type="entry name" value="FLAGELLAR EXPORT PROTEIN, MEMBRANE FLHA SUBUNIT-RELATED"/>
    <property type="match status" value="1"/>
</dbReference>
<dbReference type="PANTHER" id="PTHR30161:SF3">
    <property type="entry name" value="SECRETION SYSTEM APPARATUS PROTEIN SSAV"/>
    <property type="match status" value="1"/>
</dbReference>
<dbReference type="Pfam" id="PF00771">
    <property type="entry name" value="FHIPEP"/>
    <property type="match status" value="1"/>
</dbReference>
<dbReference type="PIRSF" id="PIRSF005419">
    <property type="entry name" value="FlhA"/>
    <property type="match status" value="1"/>
</dbReference>
<dbReference type="PRINTS" id="PR00949">
    <property type="entry name" value="TYPE3IMAPROT"/>
</dbReference>
<dbReference type="PROSITE" id="PS00994">
    <property type="entry name" value="FHIPEP"/>
    <property type="match status" value="1"/>
</dbReference>
<accession>P74856</accession>
<feature type="chain" id="PRO_0000190034" description="Secretion system apparatus protein SsaV">
    <location>
        <begin position="1"/>
        <end position="681"/>
    </location>
</feature>
<feature type="transmembrane region" description="Helical" evidence="1">
    <location>
        <begin position="25"/>
        <end position="45"/>
    </location>
</feature>
<feature type="transmembrane region" description="Helical" evidence="1">
    <location>
        <begin position="48"/>
        <end position="68"/>
    </location>
</feature>
<feature type="transmembrane region" description="Helical" evidence="1">
    <location>
        <begin position="73"/>
        <end position="93"/>
    </location>
</feature>
<feature type="transmembrane region" description="Helical" evidence="1">
    <location>
        <begin position="118"/>
        <end position="138"/>
    </location>
</feature>
<feature type="transmembrane region" description="Helical" evidence="1">
    <location>
        <begin position="206"/>
        <end position="226"/>
    </location>
</feature>
<feature type="transmembrane region" description="Helical" evidence="1">
    <location>
        <begin position="244"/>
        <end position="264"/>
    </location>
</feature>
<feature type="transmembrane region" description="Helical" evidence="1">
    <location>
        <begin position="295"/>
        <end position="315"/>
    </location>
</feature>
<feature type="transmembrane region" description="Helical" evidence="1">
    <location>
        <begin position="409"/>
        <end position="429"/>
    </location>
</feature>
<feature type="strand" evidence="6">
    <location>
        <begin position="352"/>
        <end position="357"/>
    </location>
</feature>
<feature type="turn" evidence="6">
    <location>
        <begin position="359"/>
        <end position="361"/>
    </location>
</feature>
<feature type="helix" evidence="6">
    <location>
        <begin position="366"/>
        <end position="381"/>
    </location>
</feature>
<feature type="strand" evidence="6">
    <location>
        <begin position="389"/>
        <end position="392"/>
    </location>
</feature>
<feature type="strand" evidence="6">
    <location>
        <begin position="399"/>
        <end position="404"/>
    </location>
</feature>
<feature type="strand" evidence="6">
    <location>
        <begin position="407"/>
        <end position="413"/>
    </location>
</feature>
<feature type="strand" evidence="6">
    <location>
        <begin position="420"/>
        <end position="424"/>
    </location>
</feature>
<feature type="strand" evidence="6">
    <location>
        <begin position="431"/>
        <end position="435"/>
    </location>
</feature>
<feature type="helix" evidence="5">
    <location>
        <begin position="437"/>
        <end position="439"/>
    </location>
</feature>
<feature type="strand" evidence="6">
    <location>
        <begin position="442"/>
        <end position="446"/>
    </location>
</feature>
<feature type="helix" evidence="6">
    <location>
        <begin position="448"/>
        <end position="457"/>
    </location>
</feature>
<feature type="helix" evidence="6">
    <location>
        <begin position="465"/>
        <end position="478"/>
    </location>
</feature>
<feature type="helix" evidence="6">
    <location>
        <begin position="480"/>
        <end position="483"/>
    </location>
</feature>
<feature type="helix" evidence="6">
    <location>
        <begin position="486"/>
        <end position="496"/>
    </location>
</feature>
<feature type="turn" evidence="6">
    <location>
        <begin position="497"/>
        <end position="499"/>
    </location>
</feature>
<feature type="helix" evidence="6">
    <location>
        <begin position="501"/>
        <end position="510"/>
    </location>
</feature>
<feature type="helix" evidence="6">
    <location>
        <begin position="513"/>
        <end position="525"/>
    </location>
</feature>
<feature type="helix" evidence="6">
    <location>
        <begin position="533"/>
        <end position="543"/>
    </location>
</feature>
<feature type="turn" evidence="6">
    <location>
        <begin position="544"/>
        <end position="546"/>
    </location>
</feature>
<feature type="helix" evidence="6">
    <location>
        <begin position="550"/>
        <end position="560"/>
    </location>
</feature>
<feature type="helix" evidence="6">
    <location>
        <begin position="562"/>
        <end position="569"/>
    </location>
</feature>
<feature type="strand" evidence="6">
    <location>
        <begin position="571"/>
        <end position="574"/>
    </location>
</feature>
<feature type="strand" evidence="6">
    <location>
        <begin position="578"/>
        <end position="581"/>
    </location>
</feature>
<feature type="helix" evidence="6">
    <location>
        <begin position="583"/>
        <end position="590"/>
    </location>
</feature>
<feature type="strand" evidence="6">
    <location>
        <begin position="593"/>
        <end position="596"/>
    </location>
</feature>
<feature type="strand" evidence="6">
    <location>
        <begin position="599"/>
        <end position="602"/>
    </location>
</feature>
<feature type="helix" evidence="6">
    <location>
        <begin position="606"/>
        <end position="618"/>
    </location>
</feature>
<feature type="strand" evidence="6">
    <location>
        <begin position="621"/>
        <end position="624"/>
    </location>
</feature>
<feature type="strand" evidence="6">
    <location>
        <begin position="627"/>
        <end position="630"/>
    </location>
</feature>
<feature type="helix" evidence="6">
    <location>
        <begin position="632"/>
        <end position="634"/>
    </location>
</feature>
<feature type="helix" evidence="6">
    <location>
        <begin position="635"/>
        <end position="642"/>
    </location>
</feature>
<feature type="turn" evidence="6">
    <location>
        <begin position="643"/>
        <end position="645"/>
    </location>
</feature>
<feature type="strand" evidence="6">
    <location>
        <begin position="651"/>
        <end position="653"/>
    </location>
</feature>
<feature type="helix" evidence="6">
    <location>
        <begin position="654"/>
        <end position="656"/>
    </location>
</feature>
<feature type="strand" evidence="6">
    <location>
        <begin position="665"/>
        <end position="669"/>
    </location>
</feature>
<feature type="strand" evidence="6">
    <location>
        <begin position="674"/>
        <end position="676"/>
    </location>
</feature>
<organism>
    <name type="scientific">Salmonella typhimurium (strain LT2 / SGSC1412 / ATCC 700720)</name>
    <dbReference type="NCBI Taxonomy" id="99287"/>
    <lineage>
        <taxon>Bacteria</taxon>
        <taxon>Pseudomonadati</taxon>
        <taxon>Pseudomonadota</taxon>
        <taxon>Gammaproteobacteria</taxon>
        <taxon>Enterobacterales</taxon>
        <taxon>Enterobacteriaceae</taxon>
        <taxon>Salmonella</taxon>
    </lineage>
</organism>
<name>SSAV_SALTY</name>